<evidence type="ECO:0000250" key="1"/>
<evidence type="ECO:0000250" key="2">
    <source>
        <dbReference type="UniProtKB" id="Q9UBQ7"/>
    </source>
</evidence>
<evidence type="ECO:0000305" key="3"/>
<organism>
    <name type="scientific">Mus musculus</name>
    <name type="common">Mouse</name>
    <dbReference type="NCBI Taxonomy" id="10090"/>
    <lineage>
        <taxon>Eukaryota</taxon>
        <taxon>Metazoa</taxon>
        <taxon>Chordata</taxon>
        <taxon>Craniata</taxon>
        <taxon>Vertebrata</taxon>
        <taxon>Euteleostomi</taxon>
        <taxon>Mammalia</taxon>
        <taxon>Eutheria</taxon>
        <taxon>Euarchontoglires</taxon>
        <taxon>Glires</taxon>
        <taxon>Rodentia</taxon>
        <taxon>Myomorpha</taxon>
        <taxon>Muroidea</taxon>
        <taxon>Muridae</taxon>
        <taxon>Murinae</taxon>
        <taxon>Mus</taxon>
        <taxon>Mus</taxon>
    </lineage>
</organism>
<gene>
    <name type="primary">Grhpr</name>
    <name type="synonym">Glxr</name>
</gene>
<dbReference type="EC" id="1.1.1.79"/>
<dbReference type="EC" id="1.1.1.81"/>
<dbReference type="EMBL" id="AY113690">
    <property type="protein sequence ID" value="AAM52985.1"/>
    <property type="molecule type" value="mRNA"/>
</dbReference>
<dbReference type="EMBL" id="BC010194">
    <property type="protein sequence ID" value="AAH10194.1"/>
    <property type="molecule type" value="mRNA"/>
</dbReference>
<dbReference type="CCDS" id="CCDS18128.1"/>
<dbReference type="RefSeq" id="NP_525028.1">
    <property type="nucleotide sequence ID" value="NM_080289.2"/>
</dbReference>
<dbReference type="SMR" id="Q91Z53"/>
<dbReference type="BioGRID" id="218043">
    <property type="interactions" value="5"/>
</dbReference>
<dbReference type="FunCoup" id="Q91Z53">
    <property type="interactions" value="1289"/>
</dbReference>
<dbReference type="STRING" id="10090.ENSMUSP00000047218"/>
<dbReference type="GlyGen" id="Q91Z53">
    <property type="glycosylation" value="2 sites, 1 N-linked glycan (1 site), 1 O-linked glycan (1 site)"/>
</dbReference>
<dbReference type="iPTMnet" id="Q91Z53"/>
<dbReference type="PhosphoSitePlus" id="Q91Z53"/>
<dbReference type="SwissPalm" id="Q91Z53"/>
<dbReference type="REPRODUCTION-2DPAGE" id="Q91Z53"/>
<dbReference type="jPOST" id="Q91Z53"/>
<dbReference type="PaxDb" id="10090-ENSMUSP00000047218"/>
<dbReference type="ProteomicsDB" id="271298"/>
<dbReference type="Pumba" id="Q91Z53"/>
<dbReference type="Antibodypedia" id="11982">
    <property type="antibodies" value="327 antibodies from 27 providers"/>
</dbReference>
<dbReference type="DNASU" id="76238"/>
<dbReference type="Ensembl" id="ENSMUST00000045078.13">
    <property type="protein sequence ID" value="ENSMUSP00000047218.7"/>
    <property type="gene ID" value="ENSMUSG00000035637.15"/>
</dbReference>
<dbReference type="GeneID" id="76238"/>
<dbReference type="KEGG" id="mmu:76238"/>
<dbReference type="UCSC" id="uc008ssb.1">
    <property type="organism name" value="mouse"/>
</dbReference>
<dbReference type="AGR" id="MGI:1923488"/>
<dbReference type="CTD" id="9380"/>
<dbReference type="MGI" id="MGI:1923488">
    <property type="gene designation" value="Grhpr"/>
</dbReference>
<dbReference type="VEuPathDB" id="HostDB:ENSMUSG00000035637"/>
<dbReference type="eggNOG" id="KOG0069">
    <property type="taxonomic scope" value="Eukaryota"/>
</dbReference>
<dbReference type="GeneTree" id="ENSGT00940000158578"/>
<dbReference type="InParanoid" id="Q91Z53"/>
<dbReference type="OMA" id="PHIAWAY"/>
<dbReference type="OrthoDB" id="298012at2759"/>
<dbReference type="PhylomeDB" id="Q91Z53"/>
<dbReference type="TreeFam" id="TF324791"/>
<dbReference type="Reactome" id="R-MMU-389661">
    <property type="pathway name" value="Glyoxylate metabolism and glycine degradation"/>
</dbReference>
<dbReference type="BioGRID-ORCS" id="76238">
    <property type="hits" value="5 hits in 77 CRISPR screens"/>
</dbReference>
<dbReference type="ChiTaRS" id="Grhpr">
    <property type="organism name" value="mouse"/>
</dbReference>
<dbReference type="PRO" id="PR:Q91Z53"/>
<dbReference type="Proteomes" id="UP000000589">
    <property type="component" value="Chromosome 4"/>
</dbReference>
<dbReference type="RNAct" id="Q91Z53">
    <property type="molecule type" value="protein"/>
</dbReference>
<dbReference type="Bgee" id="ENSMUSG00000035637">
    <property type="expression patterns" value="Expressed in left lobe of liver and 257 other cell types or tissues"/>
</dbReference>
<dbReference type="ExpressionAtlas" id="Q91Z53">
    <property type="expression patterns" value="baseline and differential"/>
</dbReference>
<dbReference type="GO" id="GO:1902494">
    <property type="term" value="C:catalytic complex"/>
    <property type="evidence" value="ECO:0007669"/>
    <property type="project" value="Ensembl"/>
</dbReference>
<dbReference type="GO" id="GO:0005737">
    <property type="term" value="C:cytoplasm"/>
    <property type="evidence" value="ECO:0007669"/>
    <property type="project" value="Ensembl"/>
</dbReference>
<dbReference type="GO" id="GO:0031406">
    <property type="term" value="F:carboxylic acid binding"/>
    <property type="evidence" value="ECO:0007669"/>
    <property type="project" value="Ensembl"/>
</dbReference>
<dbReference type="GO" id="GO:0030267">
    <property type="term" value="F:glyoxylate reductase (NADPH) activity"/>
    <property type="evidence" value="ECO:0007669"/>
    <property type="project" value="UniProtKB-EC"/>
</dbReference>
<dbReference type="GO" id="GO:0008465">
    <property type="term" value="F:hydroxypyruvate reductase (NADH) activity"/>
    <property type="evidence" value="ECO:0007669"/>
    <property type="project" value="Ensembl"/>
</dbReference>
<dbReference type="GO" id="GO:0120509">
    <property type="term" value="F:hydroxypyruvate reductase (NADPH) activity"/>
    <property type="evidence" value="ECO:0007669"/>
    <property type="project" value="RHEA"/>
</dbReference>
<dbReference type="GO" id="GO:0051287">
    <property type="term" value="F:NAD binding"/>
    <property type="evidence" value="ECO:0007669"/>
    <property type="project" value="Ensembl"/>
</dbReference>
<dbReference type="GO" id="GO:0070402">
    <property type="term" value="F:NADPH binding"/>
    <property type="evidence" value="ECO:0007669"/>
    <property type="project" value="Ensembl"/>
</dbReference>
<dbReference type="GO" id="GO:0042803">
    <property type="term" value="F:protein homodimerization activity"/>
    <property type="evidence" value="ECO:0007669"/>
    <property type="project" value="Ensembl"/>
</dbReference>
<dbReference type="GO" id="GO:0043648">
    <property type="term" value="P:dicarboxylic acid metabolic process"/>
    <property type="evidence" value="ECO:0007669"/>
    <property type="project" value="Ensembl"/>
</dbReference>
<dbReference type="GO" id="GO:0046487">
    <property type="term" value="P:glyoxylate metabolic process"/>
    <property type="evidence" value="ECO:0007669"/>
    <property type="project" value="Ensembl"/>
</dbReference>
<dbReference type="CDD" id="cd05301">
    <property type="entry name" value="GDH"/>
    <property type="match status" value="1"/>
</dbReference>
<dbReference type="FunFam" id="3.40.50.720:FF:000026">
    <property type="entry name" value="Glyoxylate/hydroxypyruvate reductase B"/>
    <property type="match status" value="1"/>
</dbReference>
<dbReference type="Gene3D" id="3.40.50.720">
    <property type="entry name" value="NAD(P)-binding Rossmann-like Domain"/>
    <property type="match status" value="2"/>
</dbReference>
<dbReference type="InterPro" id="IPR050223">
    <property type="entry name" value="D-isomer_2-hydroxyacid_DH"/>
</dbReference>
<dbReference type="InterPro" id="IPR006139">
    <property type="entry name" value="D-isomer_2_OHA_DH_cat_dom"/>
</dbReference>
<dbReference type="InterPro" id="IPR029753">
    <property type="entry name" value="D-isomer_DH_CS"/>
</dbReference>
<dbReference type="InterPro" id="IPR006140">
    <property type="entry name" value="D-isomer_DH_NAD-bd"/>
</dbReference>
<dbReference type="InterPro" id="IPR036291">
    <property type="entry name" value="NAD(P)-bd_dom_sf"/>
</dbReference>
<dbReference type="PANTHER" id="PTHR10996">
    <property type="entry name" value="2-HYDROXYACID DEHYDROGENASE-RELATED"/>
    <property type="match status" value="1"/>
</dbReference>
<dbReference type="PANTHER" id="PTHR10996:SF137">
    <property type="entry name" value="GLYOXYLATE REDUCTASE_HYDROXYPYRUVATE REDUCTASE"/>
    <property type="match status" value="1"/>
</dbReference>
<dbReference type="Pfam" id="PF00389">
    <property type="entry name" value="2-Hacid_dh"/>
    <property type="match status" value="1"/>
</dbReference>
<dbReference type="Pfam" id="PF02826">
    <property type="entry name" value="2-Hacid_dh_C"/>
    <property type="match status" value="1"/>
</dbReference>
<dbReference type="SUPFAM" id="SSF52283">
    <property type="entry name" value="Formate/glycerate dehydrogenase catalytic domain-like"/>
    <property type="match status" value="1"/>
</dbReference>
<dbReference type="SUPFAM" id="SSF51735">
    <property type="entry name" value="NAD(P)-binding Rossmann-fold domains"/>
    <property type="match status" value="1"/>
</dbReference>
<dbReference type="PROSITE" id="PS00671">
    <property type="entry name" value="D_2_HYDROXYACID_DH_3"/>
    <property type="match status" value="1"/>
</dbReference>
<reference key="1">
    <citation type="submission" date="2002-05" db="EMBL/GenBank/DDBJ databases">
        <title>Identification of the mouse GRHPR cDNA from liver.</title>
        <authorList>
            <person name="Cramer S.D."/>
        </authorList>
    </citation>
    <scope>NUCLEOTIDE SEQUENCE [MRNA]</scope>
    <source>
        <strain>129/SvEv</strain>
        <tissue>Liver</tissue>
    </source>
</reference>
<reference key="2">
    <citation type="journal article" date="2004" name="Genome Res.">
        <title>The status, quality, and expansion of the NIH full-length cDNA project: the Mammalian Gene Collection (MGC).</title>
        <authorList>
            <consortium name="The MGC Project Team"/>
        </authorList>
    </citation>
    <scope>NUCLEOTIDE SEQUENCE [LARGE SCALE MRNA]</scope>
    <source>
        <tissue>Mammary tumor</tissue>
    </source>
</reference>
<reference key="3">
    <citation type="submission" date="2007-03" db="UniProtKB">
        <authorList>
            <person name="Lubec G."/>
            <person name="Klug S."/>
        </authorList>
    </citation>
    <scope>PROTEIN SEQUENCE OF 44-58 AND 303-318</scope>
    <scope>IDENTIFICATION BY MASS SPECTROMETRY</scope>
    <source>
        <tissue>Hippocampus</tissue>
    </source>
</reference>
<reference key="4">
    <citation type="journal article" date="2010" name="Cell">
        <title>A tissue-specific atlas of mouse protein phosphorylation and expression.</title>
        <authorList>
            <person name="Huttlin E.L."/>
            <person name="Jedrychowski M.P."/>
            <person name="Elias J.E."/>
            <person name="Goswami T."/>
            <person name="Rad R."/>
            <person name="Beausoleil S.A."/>
            <person name="Villen J."/>
            <person name="Haas W."/>
            <person name="Sowa M.E."/>
            <person name="Gygi S.P."/>
        </authorList>
    </citation>
    <scope>IDENTIFICATION BY MASS SPECTROMETRY [LARGE SCALE ANALYSIS]</scope>
    <source>
        <tissue>Brain</tissue>
        <tissue>Brown adipose tissue</tissue>
        <tissue>Heart</tissue>
        <tissue>Kidney</tissue>
        <tissue>Liver</tissue>
        <tissue>Lung</tissue>
        <tissue>Pancreas</tissue>
        <tissue>Spleen</tissue>
        <tissue>Testis</tissue>
    </source>
</reference>
<sequence>MKPARLMKVFVTGPLPAEGRAALAQAADCEVEQWNSDDPIPRKDLEQGVVGAHGLLCRLSDRVDKKLLDAAGANLRVISTLSVGVDHLALDEIKKRGIRVGYTPGVLTDATAELAVSLLLTTCRRLPEAIEEVKNGGWSSWSPLWMCGYGLSQSTVGIVGLGRIGQAIARRLKPFGVQRFLYTGRQPRPQEAAEFQAEFVPIAQLAAESDFIVVSCSLTPDTMGLCSKDFFQKMKNTAIFINISRGDVVNQEDLYQALASGQIAAAGLDVTTPEPLPPSHPLLTLKNCVILPHIGSATYKTRNTMSLLAANNLLAGLRGEAMPSELKL</sequence>
<proteinExistence type="evidence at protein level"/>
<accession>Q91Z53</accession>
<protein>
    <recommendedName>
        <fullName>Glyoxylate reductase/hydroxypyruvate reductase</fullName>
        <ecNumber>1.1.1.79</ecNumber>
        <ecNumber>1.1.1.81</ecNumber>
    </recommendedName>
</protein>
<name>GRHPR_MOUSE</name>
<keyword id="KW-0903">Direct protein sequencing</keyword>
<keyword id="KW-0521">NADP</keyword>
<keyword id="KW-0560">Oxidoreductase</keyword>
<keyword id="KW-0597">Phosphoprotein</keyword>
<keyword id="KW-1185">Reference proteome</keyword>
<feature type="chain" id="PRO_0000075945" description="Glyoxylate reductase/hydroxypyruvate reductase">
    <location>
        <begin position="1"/>
        <end position="328"/>
    </location>
</feature>
<feature type="active site" description="Proton donor" evidence="2">
    <location>
        <position position="293"/>
    </location>
</feature>
<feature type="binding site" evidence="2">
    <location>
        <begin position="83"/>
        <end position="84"/>
    </location>
    <ligand>
        <name>substrate</name>
    </ligand>
</feature>
<feature type="binding site" evidence="2">
    <location>
        <begin position="162"/>
        <end position="164"/>
    </location>
    <ligand>
        <name>NADP(+)</name>
        <dbReference type="ChEBI" id="CHEBI:58349"/>
    </ligand>
</feature>
<feature type="binding site" evidence="2">
    <location>
        <begin position="185"/>
        <end position="188"/>
    </location>
    <ligand>
        <name>NADP(+)</name>
        <dbReference type="ChEBI" id="CHEBI:58349"/>
    </ligand>
</feature>
<feature type="binding site" evidence="2">
    <location>
        <position position="217"/>
    </location>
    <ligand>
        <name>NADP(+)</name>
        <dbReference type="ChEBI" id="CHEBI:58349"/>
    </ligand>
</feature>
<feature type="binding site" evidence="2">
    <location>
        <position position="243"/>
    </location>
    <ligand>
        <name>NADP(+)</name>
        <dbReference type="ChEBI" id="CHEBI:58349"/>
    </ligand>
</feature>
<feature type="binding site" evidence="2">
    <location>
        <position position="245"/>
    </location>
    <ligand>
        <name>substrate</name>
    </ligand>
</feature>
<feature type="binding site" evidence="2">
    <location>
        <position position="269"/>
    </location>
    <ligand>
        <name>substrate</name>
    </ligand>
</feature>
<feature type="binding site" evidence="2">
    <location>
        <begin position="293"/>
        <end position="296"/>
    </location>
    <ligand>
        <name>substrate</name>
    </ligand>
</feature>
<feature type="binding site" evidence="2">
    <location>
        <position position="295"/>
    </location>
    <ligand>
        <name>NADP(+)</name>
        <dbReference type="ChEBI" id="CHEBI:58349"/>
    </ligand>
</feature>
<feature type="site" description="Raises pKa of active site His" evidence="2">
    <location>
        <position position="274"/>
    </location>
</feature>
<feature type="modified residue" description="Phosphoserine" evidence="2">
    <location>
        <position position="36"/>
    </location>
</feature>
<feature type="modified residue" description="Phosphothreonine" evidence="2">
    <location>
        <position position="298"/>
    </location>
</feature>
<comment type="function">
    <text evidence="1">Enzyme with hydroxy-pyruvate reductase, glyoxylate reductase and D-glycerate dehydrogenase enzymatic activities. Reduces hydroxypyruvate to D-glycerate, glyoxylate to glycolate oxidizes D-glycerate to hydroxypyruvate (By similarity).</text>
</comment>
<comment type="catalytic activity">
    <reaction>
        <text>glycolate + NADP(+) = glyoxylate + NADPH + H(+)</text>
        <dbReference type="Rhea" id="RHEA:10992"/>
        <dbReference type="ChEBI" id="CHEBI:15378"/>
        <dbReference type="ChEBI" id="CHEBI:29805"/>
        <dbReference type="ChEBI" id="CHEBI:36655"/>
        <dbReference type="ChEBI" id="CHEBI:57783"/>
        <dbReference type="ChEBI" id="CHEBI:58349"/>
        <dbReference type="EC" id="1.1.1.79"/>
    </reaction>
</comment>
<comment type="catalytic activity">
    <reaction>
        <text>(R)-glycerate + NAD(+) = 3-hydroxypyruvate + NADH + H(+)</text>
        <dbReference type="Rhea" id="RHEA:17905"/>
        <dbReference type="ChEBI" id="CHEBI:15378"/>
        <dbReference type="ChEBI" id="CHEBI:16659"/>
        <dbReference type="ChEBI" id="CHEBI:17180"/>
        <dbReference type="ChEBI" id="CHEBI:57540"/>
        <dbReference type="ChEBI" id="CHEBI:57945"/>
        <dbReference type="EC" id="1.1.1.81"/>
    </reaction>
</comment>
<comment type="catalytic activity">
    <reaction>
        <text>(R)-glycerate + NADP(+) = 3-hydroxypyruvate + NADPH + H(+)</text>
        <dbReference type="Rhea" id="RHEA:18657"/>
        <dbReference type="ChEBI" id="CHEBI:15378"/>
        <dbReference type="ChEBI" id="CHEBI:16659"/>
        <dbReference type="ChEBI" id="CHEBI:17180"/>
        <dbReference type="ChEBI" id="CHEBI:57783"/>
        <dbReference type="ChEBI" id="CHEBI:58349"/>
        <dbReference type="EC" id="1.1.1.81"/>
    </reaction>
</comment>
<comment type="subunit">
    <text evidence="1">Homodimer.</text>
</comment>
<comment type="similarity">
    <text evidence="3">Belongs to the D-isomer specific 2-hydroxyacid dehydrogenase family.</text>
</comment>